<proteinExistence type="inferred from homology"/>
<feature type="chain" id="PRO_0000158731" description="Adenylate kinase">
    <location>
        <begin position="1"/>
        <end position="189"/>
    </location>
</feature>
<feature type="region of interest" description="NMP" evidence="1">
    <location>
        <begin position="31"/>
        <end position="60"/>
    </location>
</feature>
<feature type="region of interest" description="LID" evidence="1">
    <location>
        <begin position="127"/>
        <end position="137"/>
    </location>
</feature>
<feature type="binding site" evidence="1">
    <location>
        <begin position="11"/>
        <end position="16"/>
    </location>
    <ligand>
        <name>ATP</name>
        <dbReference type="ChEBI" id="CHEBI:30616"/>
    </ligand>
</feature>
<feature type="binding site" evidence="1">
    <location>
        <position position="32"/>
    </location>
    <ligand>
        <name>AMP</name>
        <dbReference type="ChEBI" id="CHEBI:456215"/>
    </ligand>
</feature>
<feature type="binding site" evidence="1">
    <location>
        <position position="37"/>
    </location>
    <ligand>
        <name>AMP</name>
        <dbReference type="ChEBI" id="CHEBI:456215"/>
    </ligand>
</feature>
<feature type="binding site" evidence="1">
    <location>
        <begin position="58"/>
        <end position="60"/>
    </location>
    <ligand>
        <name>AMP</name>
        <dbReference type="ChEBI" id="CHEBI:456215"/>
    </ligand>
</feature>
<feature type="binding site" evidence="1">
    <location>
        <begin position="86"/>
        <end position="89"/>
    </location>
    <ligand>
        <name>AMP</name>
        <dbReference type="ChEBI" id="CHEBI:456215"/>
    </ligand>
</feature>
<feature type="binding site" evidence="1">
    <location>
        <position position="93"/>
    </location>
    <ligand>
        <name>AMP</name>
        <dbReference type="ChEBI" id="CHEBI:456215"/>
    </ligand>
</feature>
<feature type="binding site" evidence="1">
    <location>
        <position position="128"/>
    </location>
    <ligand>
        <name>ATP</name>
        <dbReference type="ChEBI" id="CHEBI:30616"/>
    </ligand>
</feature>
<feature type="binding site" evidence="1">
    <location>
        <position position="134"/>
    </location>
    <ligand>
        <name>AMP</name>
        <dbReference type="ChEBI" id="CHEBI:456215"/>
    </ligand>
</feature>
<feature type="binding site" evidence="1">
    <location>
        <position position="145"/>
    </location>
    <ligand>
        <name>AMP</name>
        <dbReference type="ChEBI" id="CHEBI:456215"/>
    </ligand>
</feature>
<feature type="binding site" evidence="1">
    <location>
        <position position="173"/>
    </location>
    <ligand>
        <name>ATP</name>
        <dbReference type="ChEBI" id="CHEBI:30616"/>
    </ligand>
</feature>
<reference key="1">
    <citation type="journal article" date="2003" name="Science">
        <title>A genomic view of the human-Bacteroides thetaiotaomicron symbiosis.</title>
        <authorList>
            <person name="Xu J."/>
            <person name="Bjursell M.K."/>
            <person name="Himrod J."/>
            <person name="Deng S."/>
            <person name="Carmichael L.K."/>
            <person name="Chiang H.C."/>
            <person name="Hooper L.V."/>
            <person name="Gordon J.I."/>
        </authorList>
    </citation>
    <scope>NUCLEOTIDE SEQUENCE [LARGE SCALE GENOMIC DNA]</scope>
    <source>
        <strain>ATCC 29148 / DSM 2079 / JCM 5827 / CCUG 10774 / NCTC 10582 / VPI-5482 / E50</strain>
    </source>
</reference>
<sequence>MLNIVIFGAPGSGKGTQSERIVEKYGINHISTGDVLRAEIKNGTELGKTAKGYIDQGQLIPDELMIDILASVFDSFKDSKGVIFDGFPRTIAQAEALKKMLAERGQDVSVMLDLEVPEDELMVRLIKRGKDSGRADDNEETIKKRLHVYHSQTSPLIDWYKNEKKYQHINGLGTMDGIFADICEAVDKL</sequence>
<accession>Q89ZJ0</accession>
<dbReference type="EC" id="2.7.4.3" evidence="1"/>
<dbReference type="EMBL" id="AE015928">
    <property type="protein sequence ID" value="AAO79492.1"/>
    <property type="molecule type" value="Genomic_DNA"/>
</dbReference>
<dbReference type="RefSeq" id="NP_813298.1">
    <property type="nucleotide sequence ID" value="NC_004663.1"/>
</dbReference>
<dbReference type="RefSeq" id="WP_008760056.1">
    <property type="nucleotide sequence ID" value="NC_004663.1"/>
</dbReference>
<dbReference type="SMR" id="Q89ZJ0"/>
<dbReference type="FunCoup" id="Q89ZJ0">
    <property type="interactions" value="543"/>
</dbReference>
<dbReference type="STRING" id="226186.BT_4387"/>
<dbReference type="PaxDb" id="226186-BT_4387"/>
<dbReference type="EnsemblBacteria" id="AAO79492">
    <property type="protein sequence ID" value="AAO79492"/>
    <property type="gene ID" value="BT_4387"/>
</dbReference>
<dbReference type="KEGG" id="bth:BT_4387"/>
<dbReference type="PATRIC" id="fig|226186.12.peg.4465"/>
<dbReference type="eggNOG" id="COG0563">
    <property type="taxonomic scope" value="Bacteria"/>
</dbReference>
<dbReference type="HOGENOM" id="CLU_032354_4_1_10"/>
<dbReference type="InParanoid" id="Q89ZJ0"/>
<dbReference type="OrthoDB" id="9805030at2"/>
<dbReference type="UniPathway" id="UPA00588">
    <property type="reaction ID" value="UER00649"/>
</dbReference>
<dbReference type="Proteomes" id="UP000001414">
    <property type="component" value="Chromosome"/>
</dbReference>
<dbReference type="GO" id="GO:0005737">
    <property type="term" value="C:cytoplasm"/>
    <property type="evidence" value="ECO:0000318"/>
    <property type="project" value="GO_Central"/>
</dbReference>
<dbReference type="GO" id="GO:0005829">
    <property type="term" value="C:cytosol"/>
    <property type="evidence" value="ECO:0000318"/>
    <property type="project" value="GO_Central"/>
</dbReference>
<dbReference type="GO" id="GO:0004017">
    <property type="term" value="F:adenylate kinase activity"/>
    <property type="evidence" value="ECO:0000318"/>
    <property type="project" value="GO_Central"/>
</dbReference>
<dbReference type="GO" id="GO:0005524">
    <property type="term" value="F:ATP binding"/>
    <property type="evidence" value="ECO:0007669"/>
    <property type="project" value="UniProtKB-UniRule"/>
</dbReference>
<dbReference type="GO" id="GO:0004550">
    <property type="term" value="F:nucleoside diphosphate kinase activity"/>
    <property type="evidence" value="ECO:0000318"/>
    <property type="project" value="GO_Central"/>
</dbReference>
<dbReference type="GO" id="GO:0044209">
    <property type="term" value="P:AMP salvage"/>
    <property type="evidence" value="ECO:0007669"/>
    <property type="project" value="UniProtKB-UniRule"/>
</dbReference>
<dbReference type="GO" id="GO:0009132">
    <property type="term" value="P:nucleoside diphosphate metabolic process"/>
    <property type="evidence" value="ECO:0000318"/>
    <property type="project" value="GO_Central"/>
</dbReference>
<dbReference type="GO" id="GO:0009123">
    <property type="term" value="P:nucleoside monophosphate metabolic process"/>
    <property type="evidence" value="ECO:0000318"/>
    <property type="project" value="GO_Central"/>
</dbReference>
<dbReference type="CDD" id="cd01428">
    <property type="entry name" value="ADK"/>
    <property type="match status" value="1"/>
</dbReference>
<dbReference type="Gene3D" id="3.40.50.300">
    <property type="entry name" value="P-loop containing nucleotide triphosphate hydrolases"/>
    <property type="match status" value="1"/>
</dbReference>
<dbReference type="HAMAP" id="MF_00235">
    <property type="entry name" value="Adenylate_kinase_Adk"/>
    <property type="match status" value="1"/>
</dbReference>
<dbReference type="InterPro" id="IPR000850">
    <property type="entry name" value="Adenylat/UMP-CMP_kin"/>
</dbReference>
<dbReference type="InterPro" id="IPR033690">
    <property type="entry name" value="Adenylat_kinase_CS"/>
</dbReference>
<dbReference type="InterPro" id="IPR027417">
    <property type="entry name" value="P-loop_NTPase"/>
</dbReference>
<dbReference type="NCBIfam" id="NF001381">
    <property type="entry name" value="PRK00279.1-3"/>
    <property type="match status" value="1"/>
</dbReference>
<dbReference type="NCBIfam" id="NF011100">
    <property type="entry name" value="PRK14527.1"/>
    <property type="match status" value="1"/>
</dbReference>
<dbReference type="NCBIfam" id="NF011101">
    <property type="entry name" value="PRK14528.1"/>
    <property type="match status" value="1"/>
</dbReference>
<dbReference type="NCBIfam" id="NF011104">
    <property type="entry name" value="PRK14531.1"/>
    <property type="match status" value="1"/>
</dbReference>
<dbReference type="NCBIfam" id="NF011105">
    <property type="entry name" value="PRK14532.1"/>
    <property type="match status" value="1"/>
</dbReference>
<dbReference type="PANTHER" id="PTHR23359">
    <property type="entry name" value="NUCLEOTIDE KINASE"/>
    <property type="match status" value="1"/>
</dbReference>
<dbReference type="Pfam" id="PF00406">
    <property type="entry name" value="ADK"/>
    <property type="match status" value="1"/>
</dbReference>
<dbReference type="PRINTS" id="PR00094">
    <property type="entry name" value="ADENYLTKNASE"/>
</dbReference>
<dbReference type="SUPFAM" id="SSF52540">
    <property type="entry name" value="P-loop containing nucleoside triphosphate hydrolases"/>
    <property type="match status" value="1"/>
</dbReference>
<dbReference type="PROSITE" id="PS00113">
    <property type="entry name" value="ADENYLATE_KINASE"/>
    <property type="match status" value="1"/>
</dbReference>
<evidence type="ECO:0000255" key="1">
    <source>
        <dbReference type="HAMAP-Rule" id="MF_00235"/>
    </source>
</evidence>
<organism>
    <name type="scientific">Bacteroides thetaiotaomicron (strain ATCC 29148 / DSM 2079 / JCM 5827 / CCUG 10774 / NCTC 10582 / VPI-5482 / E50)</name>
    <dbReference type="NCBI Taxonomy" id="226186"/>
    <lineage>
        <taxon>Bacteria</taxon>
        <taxon>Pseudomonadati</taxon>
        <taxon>Bacteroidota</taxon>
        <taxon>Bacteroidia</taxon>
        <taxon>Bacteroidales</taxon>
        <taxon>Bacteroidaceae</taxon>
        <taxon>Bacteroides</taxon>
    </lineage>
</organism>
<name>KAD_BACTN</name>
<gene>
    <name evidence="1" type="primary">adk</name>
    <name type="ordered locus">BT_4387</name>
</gene>
<keyword id="KW-0067">ATP-binding</keyword>
<keyword id="KW-0963">Cytoplasm</keyword>
<keyword id="KW-0418">Kinase</keyword>
<keyword id="KW-0545">Nucleotide biosynthesis</keyword>
<keyword id="KW-0547">Nucleotide-binding</keyword>
<keyword id="KW-1185">Reference proteome</keyword>
<keyword id="KW-0808">Transferase</keyword>
<protein>
    <recommendedName>
        <fullName evidence="1">Adenylate kinase</fullName>
        <shortName evidence="1">AK</shortName>
        <ecNumber evidence="1">2.7.4.3</ecNumber>
    </recommendedName>
    <alternativeName>
        <fullName evidence="1">ATP-AMP transphosphorylase</fullName>
    </alternativeName>
    <alternativeName>
        <fullName evidence="1">ATP:AMP phosphotransferase</fullName>
    </alternativeName>
    <alternativeName>
        <fullName evidence="1">Adenylate monophosphate kinase</fullName>
    </alternativeName>
</protein>
<comment type="function">
    <text evidence="1">Catalyzes the reversible transfer of the terminal phosphate group between ATP and AMP. Plays an important role in cellular energy homeostasis and in adenine nucleotide metabolism.</text>
</comment>
<comment type="catalytic activity">
    <reaction evidence="1">
        <text>AMP + ATP = 2 ADP</text>
        <dbReference type="Rhea" id="RHEA:12973"/>
        <dbReference type="ChEBI" id="CHEBI:30616"/>
        <dbReference type="ChEBI" id="CHEBI:456215"/>
        <dbReference type="ChEBI" id="CHEBI:456216"/>
        <dbReference type="EC" id="2.7.4.3"/>
    </reaction>
</comment>
<comment type="pathway">
    <text evidence="1">Purine metabolism; AMP biosynthesis via salvage pathway; AMP from ADP: step 1/1.</text>
</comment>
<comment type="subunit">
    <text evidence="1">Monomer.</text>
</comment>
<comment type="subcellular location">
    <subcellularLocation>
        <location evidence="1">Cytoplasm</location>
    </subcellularLocation>
</comment>
<comment type="domain">
    <text evidence="1">Consists of three domains, a large central CORE domain and two small peripheral domains, NMPbind and LID, which undergo movements during catalysis. The LID domain closes over the site of phosphoryl transfer upon ATP binding. Assembling and dissambling the active center during each catalytic cycle provides an effective means to prevent ATP hydrolysis.</text>
</comment>
<comment type="similarity">
    <text evidence="1">Belongs to the adenylate kinase family.</text>
</comment>